<comment type="function">
    <text evidence="1">Beta-galactosyltransferase that transfers beta-galactose to hydroxylysine residues of type I collagen. By acting on collagen glycosylation, facilitates the formation of collagen triple helix.</text>
</comment>
<comment type="catalytic activity">
    <reaction evidence="1">
        <text>(5R)-5-hydroxy-L-lysyl-[collagen] + UDP-alpha-D-galactose = (5R)-5-O-(beta-D-galactosyl)-5-hydroxy-L-lysyl-[collagen] + UDP + H(+)</text>
        <dbReference type="Rhea" id="RHEA:12637"/>
        <dbReference type="Rhea" id="RHEA-COMP:12752"/>
        <dbReference type="Rhea" id="RHEA-COMP:12753"/>
        <dbReference type="ChEBI" id="CHEBI:15378"/>
        <dbReference type="ChEBI" id="CHEBI:58223"/>
        <dbReference type="ChEBI" id="CHEBI:66914"/>
        <dbReference type="ChEBI" id="CHEBI:133442"/>
        <dbReference type="ChEBI" id="CHEBI:133443"/>
        <dbReference type="EC" id="2.4.1.50"/>
    </reaction>
</comment>
<comment type="subcellular location">
    <subcellularLocation>
        <location evidence="3">Endoplasmic reticulum lumen</location>
    </subcellularLocation>
</comment>
<comment type="similarity">
    <text evidence="5">Belongs to the glycosyltransferase 25 family.</text>
</comment>
<keyword id="KW-0256">Endoplasmic reticulum</keyword>
<keyword id="KW-0325">Glycoprotein</keyword>
<keyword id="KW-0328">Glycosyltransferase</keyword>
<keyword id="KW-1185">Reference proteome</keyword>
<keyword id="KW-0732">Signal</keyword>
<keyword id="KW-0808">Transferase</keyword>
<evidence type="ECO:0000250" key="1">
    <source>
        <dbReference type="UniProtKB" id="Q8NBJ5"/>
    </source>
</evidence>
<evidence type="ECO:0000255" key="2"/>
<evidence type="ECO:0000255" key="3">
    <source>
        <dbReference type="PROSITE-ProRule" id="PRU10138"/>
    </source>
</evidence>
<evidence type="ECO:0000256" key="4">
    <source>
        <dbReference type="SAM" id="MobiDB-lite"/>
    </source>
</evidence>
<evidence type="ECO:0000305" key="5"/>
<organism>
    <name type="scientific">Xenopus laevis</name>
    <name type="common">African clawed frog</name>
    <dbReference type="NCBI Taxonomy" id="8355"/>
    <lineage>
        <taxon>Eukaryota</taxon>
        <taxon>Metazoa</taxon>
        <taxon>Chordata</taxon>
        <taxon>Craniata</taxon>
        <taxon>Vertebrata</taxon>
        <taxon>Euteleostomi</taxon>
        <taxon>Amphibia</taxon>
        <taxon>Batrachia</taxon>
        <taxon>Anura</taxon>
        <taxon>Pipoidea</taxon>
        <taxon>Pipidae</taxon>
        <taxon>Xenopodinae</taxon>
        <taxon>Xenopus</taxon>
        <taxon>Xenopus</taxon>
    </lineage>
</organism>
<feature type="signal peptide" evidence="2">
    <location>
        <begin position="1"/>
        <end position="24"/>
    </location>
</feature>
<feature type="chain" id="PRO_0000309540" description="Procollagen galactosyltransferase 1-B">
    <location>
        <begin position="25"/>
        <end position="611"/>
    </location>
</feature>
<feature type="region of interest" description="Disordered" evidence="4">
    <location>
        <begin position="576"/>
        <end position="611"/>
    </location>
</feature>
<feature type="short sequence motif" description="Prevents secretion from ER" evidence="3">
    <location>
        <begin position="608"/>
        <end position="611"/>
    </location>
</feature>
<feature type="compositionally biased region" description="Basic and acidic residues" evidence="4">
    <location>
        <begin position="576"/>
        <end position="591"/>
    </location>
</feature>
<feature type="glycosylation site" description="N-linked (GlcNAc...) asparagine" evidence="2">
    <location>
        <position position="85"/>
    </location>
</feature>
<feature type="glycosylation site" description="N-linked (GlcNAc...) asparagine" evidence="2">
    <location>
        <position position="173"/>
    </location>
</feature>
<feature type="glycosylation site" description="N-linked (GlcNAc...) asparagine" evidence="2">
    <location>
        <position position="370"/>
    </location>
</feature>
<feature type="glycosylation site" description="N-linked (GlcNAc...) asparagine" evidence="2">
    <location>
        <position position="373"/>
    </location>
</feature>
<feature type="glycosylation site" description="N-linked (GlcNAc...) asparagine" evidence="2">
    <location>
        <position position="568"/>
    </location>
</feature>
<protein>
    <recommendedName>
        <fullName>Procollagen galactosyltransferase 1-B</fullName>
        <ecNumber evidence="1">2.4.1.50</ecNumber>
    </recommendedName>
    <alternativeName>
        <fullName>Collagen beta(1-O)galactosyltransferase 1-B</fullName>
    </alternativeName>
    <alternativeName>
        <fullName>Glycosyltransferase 25 family member 1-B</fullName>
    </alternativeName>
    <alternativeName>
        <fullName>Hydroxylysine galactosyltransferase 1-B</fullName>
    </alternativeName>
</protein>
<gene>
    <name type="primary">colgalt1-b</name>
    <name type="synonym">glt25d1-b</name>
</gene>
<proteinExistence type="evidence at transcript level"/>
<dbReference type="EC" id="2.4.1.50" evidence="1"/>
<dbReference type="EMBL" id="BC085226">
    <property type="protein sequence ID" value="AAH85226.1"/>
    <property type="molecule type" value="mRNA"/>
</dbReference>
<dbReference type="RefSeq" id="NP_001088623.1">
    <property type="nucleotide sequence ID" value="NM_001095154.1"/>
</dbReference>
<dbReference type="SMR" id="Q5U483"/>
<dbReference type="CAZy" id="GT25">
    <property type="family name" value="Glycosyltransferase Family 25"/>
</dbReference>
<dbReference type="GlyCosmos" id="Q5U483">
    <property type="glycosylation" value="5 sites, No reported glycans"/>
</dbReference>
<dbReference type="DNASU" id="495521"/>
<dbReference type="GeneID" id="495521"/>
<dbReference type="KEGG" id="xla:495521"/>
<dbReference type="AGR" id="Xenbase:XB-GENE-6253736"/>
<dbReference type="CTD" id="495521"/>
<dbReference type="Xenbase" id="XB-GENE-6253736">
    <property type="gene designation" value="colgalt1.S"/>
</dbReference>
<dbReference type="OrthoDB" id="47375at2759"/>
<dbReference type="Proteomes" id="UP000186698">
    <property type="component" value="Chromosome 3S"/>
</dbReference>
<dbReference type="Bgee" id="495521">
    <property type="expression patterns" value="Expressed in internal ear and 19 other cell types or tissues"/>
</dbReference>
<dbReference type="GO" id="GO:0005788">
    <property type="term" value="C:endoplasmic reticulum lumen"/>
    <property type="evidence" value="ECO:0000250"/>
    <property type="project" value="UniProtKB"/>
</dbReference>
<dbReference type="GO" id="GO:0050211">
    <property type="term" value="F:procollagen galactosyltransferase activity"/>
    <property type="evidence" value="ECO:0000250"/>
    <property type="project" value="UniProtKB"/>
</dbReference>
<dbReference type="GO" id="GO:1904028">
    <property type="term" value="P:positive regulation of collagen fibril organization"/>
    <property type="evidence" value="ECO:0000250"/>
    <property type="project" value="UniProtKB"/>
</dbReference>
<dbReference type="CDD" id="cd06532">
    <property type="entry name" value="Glyco_transf_25"/>
    <property type="match status" value="1"/>
</dbReference>
<dbReference type="FunFam" id="3.90.550.10:FF:000048">
    <property type="entry name" value="Glycosyltransferase 25 family member 1"/>
    <property type="match status" value="1"/>
</dbReference>
<dbReference type="Gene3D" id="3.90.550.10">
    <property type="entry name" value="Spore Coat Polysaccharide Biosynthesis Protein SpsA, Chain A"/>
    <property type="match status" value="1"/>
</dbReference>
<dbReference type="InterPro" id="IPR050757">
    <property type="entry name" value="Collagen_mod_GT25"/>
</dbReference>
<dbReference type="InterPro" id="IPR002654">
    <property type="entry name" value="Glyco_trans_25"/>
</dbReference>
<dbReference type="InterPro" id="IPR029044">
    <property type="entry name" value="Nucleotide-diphossugar_trans"/>
</dbReference>
<dbReference type="PANTHER" id="PTHR10730:SF28">
    <property type="entry name" value="PROCOLLAGEN GALACTOSYLTRANSFERASE 1"/>
    <property type="match status" value="1"/>
</dbReference>
<dbReference type="PANTHER" id="PTHR10730">
    <property type="entry name" value="PROCOLLAGEN-LYSINE,2-OXOGLUTARATE 5-DIOXYGENASE/GLYCOSYLTRANSFERASE 25 FAMILY MEMBER"/>
    <property type="match status" value="1"/>
</dbReference>
<dbReference type="Pfam" id="PF03452">
    <property type="entry name" value="Anp1"/>
    <property type="match status" value="1"/>
</dbReference>
<dbReference type="Pfam" id="PF01755">
    <property type="entry name" value="Glyco_transf_25"/>
    <property type="match status" value="1"/>
</dbReference>
<dbReference type="SUPFAM" id="SSF53448">
    <property type="entry name" value="Nucleotide-diphospho-sugar transferases"/>
    <property type="match status" value="1"/>
</dbReference>
<dbReference type="PROSITE" id="PS00014">
    <property type="entry name" value="ER_TARGET"/>
    <property type="match status" value="1"/>
</dbReference>
<reference key="1">
    <citation type="submission" date="2004-10" db="EMBL/GenBank/DDBJ databases">
        <authorList>
            <consortium name="NIH - Xenopus Gene Collection (XGC) project"/>
        </authorList>
    </citation>
    <scope>NUCLEOTIDE SEQUENCE [LARGE SCALE MRNA]</scope>
    <source>
        <tissue>Embryo</tissue>
    </source>
</reference>
<sequence>MSQAGVERLLKGLQILVLVLRLSAGYFPEERWNPESPFRSPTVLIAVLARNSEGSLPEVLGALDRLHYPKERISLWVATDHNFDNTSQILREWLINVQNQYHHVEWRPQEHPRWFRDEESPKHWSHSRYEYVMKLRQAALTSAREMWADYIFFLDADNLLTNSETLNLLIAENKTVVAPMLESRAAYSNFWCGMTTQGYYRRTPAYMPIRRRERQGCFPVPMVHSTFLIDLRKEASQQLDFYPPHADYTWAFDDIIVFAFSCRQAEVQMFLCNKEIYGYLPVPLRSHSTLLDETDNFLHTKLEAMVKGPQVHPSSFVTIPKKVPDKMSFDEVFLINLKHRQDRRERMKRTLYELQIDFKLVDAVYGKMLNQSNVTEMGIKMLPGYKDPYHGRPLTRGEMGCFLSHYNIWKEISERNLEVSAVLEDDLRFEIFFKRRLQTLLHDLEIAKLDWDLIYLGRKRMQVDEPEEPVPGVRNLVVSDYSYWTLGYLISLRGARKLLNAEPLGKMLPVDEFLPVMYDKHPISDYSSHFSTRDLRAFSVEPLLLYPTHYTGDKGYISDTETSVLWDNVTQPTDWDRAKSRKTHQQEKLRSEALNTPSMGSPFDNTARDEL</sequence>
<accession>Q5U483</accession>
<name>G251B_XENLA</name>